<dbReference type="EMBL" id="Z35941">
    <property type="status" value="NOT_ANNOTATED_CDS"/>
    <property type="molecule type" value="Genomic_DNA"/>
</dbReference>
<dbReference type="EMBL" id="BK006936">
    <property type="protein sequence ID" value="DAA07192.1"/>
    <property type="molecule type" value="Genomic_DNA"/>
</dbReference>
<dbReference type="RefSeq" id="NP_878048.1">
    <property type="nucleotide sequence ID" value="NM_001184540.1"/>
</dbReference>
<dbReference type="BioGRID" id="36986">
    <property type="interactions" value="17"/>
</dbReference>
<dbReference type="FunCoup" id="Q3E794">
    <property type="interactions" value="5"/>
</dbReference>
<dbReference type="STRING" id="4932.YBR072C-A"/>
<dbReference type="PaxDb" id="4932-YBR072C-A"/>
<dbReference type="EnsemblFungi" id="YBR072C-A_mRNA">
    <property type="protein sequence ID" value="YBR072C-A"/>
    <property type="gene ID" value="YBR072C-A"/>
</dbReference>
<dbReference type="GeneID" id="1466444"/>
<dbReference type="KEGG" id="sce:YBR072C-A"/>
<dbReference type="AGR" id="SGD:S000028532"/>
<dbReference type="SGD" id="S000028532">
    <property type="gene designation" value="YBR072C-A"/>
</dbReference>
<dbReference type="VEuPathDB" id="FungiDB:YBR072C-A"/>
<dbReference type="HOGENOM" id="CLU_3070471_0_0_1"/>
<dbReference type="InParanoid" id="Q3E794"/>
<dbReference type="BioCyc" id="YEAST:G3O-29258-MONOMER"/>
<dbReference type="BioGRID-ORCS" id="1466444">
    <property type="hits" value="0 hits in 10 CRISPR screens"/>
</dbReference>
<dbReference type="PRO" id="PR:Q3E794"/>
<dbReference type="Proteomes" id="UP000002311">
    <property type="component" value="Chromosome II"/>
</dbReference>
<dbReference type="RNAct" id="Q3E794">
    <property type="molecule type" value="protein"/>
</dbReference>
<dbReference type="GO" id="GO:0005777">
    <property type="term" value="C:peroxisome"/>
    <property type="evidence" value="ECO:0000314"/>
    <property type="project" value="SGD"/>
</dbReference>
<keyword id="KW-1185">Reference proteome</keyword>
<evidence type="ECO:0000256" key="1">
    <source>
        <dbReference type="SAM" id="MobiDB-lite"/>
    </source>
</evidence>
<sequence>MHILTRSSKNAFPRSRSRQDIHISSHIHRDTSNSALLKILVITRTRLDSFVKT</sequence>
<protein>
    <recommendedName>
        <fullName>Uncharacterized protein YBR072C-A</fullName>
    </recommendedName>
</protein>
<reference key="1">
    <citation type="journal article" date="1994" name="EMBO J.">
        <title>Complete DNA sequence of yeast chromosome II.</title>
        <authorList>
            <person name="Feldmann H."/>
            <person name="Aigle M."/>
            <person name="Aljinovic G."/>
            <person name="Andre B."/>
            <person name="Baclet M.C."/>
            <person name="Barthe C."/>
            <person name="Baur A."/>
            <person name="Becam A.-M."/>
            <person name="Biteau N."/>
            <person name="Boles E."/>
            <person name="Brandt T."/>
            <person name="Brendel M."/>
            <person name="Brueckner M."/>
            <person name="Bussereau F."/>
            <person name="Christiansen C."/>
            <person name="Contreras R."/>
            <person name="Crouzet M."/>
            <person name="Cziepluch C."/>
            <person name="Demolis N."/>
            <person name="Delaveau T."/>
            <person name="Doignon F."/>
            <person name="Domdey H."/>
            <person name="Duesterhus S."/>
            <person name="Dubois E."/>
            <person name="Dujon B."/>
            <person name="El Bakkoury M."/>
            <person name="Entian K.-D."/>
            <person name="Feuermann M."/>
            <person name="Fiers W."/>
            <person name="Fobo G.M."/>
            <person name="Fritz C."/>
            <person name="Gassenhuber J."/>
            <person name="Glansdorff N."/>
            <person name="Goffeau A."/>
            <person name="Grivell L.A."/>
            <person name="de Haan M."/>
            <person name="Hein C."/>
            <person name="Herbert C.J."/>
            <person name="Hollenberg C.P."/>
            <person name="Holmstroem K."/>
            <person name="Jacq C."/>
            <person name="Jacquet M."/>
            <person name="Jauniaux J.-C."/>
            <person name="Jonniaux J.-L."/>
            <person name="Kallesoee T."/>
            <person name="Kiesau P."/>
            <person name="Kirchrath L."/>
            <person name="Koetter P."/>
            <person name="Korol S."/>
            <person name="Liebl S."/>
            <person name="Logghe M."/>
            <person name="Lohan A.J.E."/>
            <person name="Louis E.J."/>
            <person name="Li Z.Y."/>
            <person name="Maat M.J."/>
            <person name="Mallet L."/>
            <person name="Mannhaupt G."/>
            <person name="Messenguy F."/>
            <person name="Miosga T."/>
            <person name="Molemans F."/>
            <person name="Mueller S."/>
            <person name="Nasr F."/>
            <person name="Obermaier B."/>
            <person name="Perea J."/>
            <person name="Pierard A."/>
            <person name="Piravandi E."/>
            <person name="Pohl F.M."/>
            <person name="Pohl T.M."/>
            <person name="Potier S."/>
            <person name="Proft M."/>
            <person name="Purnelle B."/>
            <person name="Ramezani Rad M."/>
            <person name="Rieger M."/>
            <person name="Rose M."/>
            <person name="Schaaff-Gerstenschlaeger I."/>
            <person name="Scherens B."/>
            <person name="Schwarzlose C."/>
            <person name="Skala J."/>
            <person name="Slonimski P.P."/>
            <person name="Smits P.H.M."/>
            <person name="Souciet J.-L."/>
            <person name="Steensma H.Y."/>
            <person name="Stucka R."/>
            <person name="Urrestarazu L.A."/>
            <person name="van der Aart Q.J.M."/>
            <person name="Van Dyck L."/>
            <person name="Vassarotti A."/>
            <person name="Vetter I."/>
            <person name="Vierendeels F."/>
            <person name="Vissers S."/>
            <person name="Wagner G."/>
            <person name="de Wergifosse P."/>
            <person name="Wolfe K.H."/>
            <person name="Zagulski M."/>
            <person name="Zimmermann F.K."/>
            <person name="Mewes H.-W."/>
            <person name="Kleine K."/>
        </authorList>
    </citation>
    <scope>NUCLEOTIDE SEQUENCE [LARGE SCALE GENOMIC DNA]</scope>
    <source>
        <strain>ATCC 204508 / S288c</strain>
    </source>
</reference>
<reference key="2">
    <citation type="journal article" date="2014" name="G3 (Bethesda)">
        <title>The reference genome sequence of Saccharomyces cerevisiae: Then and now.</title>
        <authorList>
            <person name="Engel S.R."/>
            <person name="Dietrich F.S."/>
            <person name="Fisk D.G."/>
            <person name="Binkley G."/>
            <person name="Balakrishnan R."/>
            <person name="Costanzo M.C."/>
            <person name="Dwight S.S."/>
            <person name="Hitz B.C."/>
            <person name="Karra K."/>
            <person name="Nash R.S."/>
            <person name="Weng S."/>
            <person name="Wong E.D."/>
            <person name="Lloyd P."/>
            <person name="Skrzypek M.S."/>
            <person name="Miyasato S.R."/>
            <person name="Simison M."/>
            <person name="Cherry J.M."/>
        </authorList>
    </citation>
    <scope>GENOME REANNOTATION</scope>
    <source>
        <strain>ATCC 204508 / S288c</strain>
    </source>
</reference>
<reference key="3">
    <citation type="journal article" date="2003" name="Genome Res.">
        <title>Systematic discovery of new genes in the Saccharomyces cerevisiae genome.</title>
        <authorList>
            <person name="Kessler M.M."/>
            <person name="Zeng Q."/>
            <person name="Hogan S."/>
            <person name="Cook R."/>
            <person name="Morales A.J."/>
            <person name="Cottarel G."/>
        </authorList>
    </citation>
    <scope>GENOME REANNOTATION</scope>
</reference>
<feature type="chain" id="PRO_0000248435" description="Uncharacterized protein YBR072C-A">
    <location>
        <begin position="1"/>
        <end position="53"/>
    </location>
</feature>
<feature type="region of interest" description="Disordered" evidence="1">
    <location>
        <begin position="1"/>
        <end position="25"/>
    </location>
</feature>
<feature type="compositionally biased region" description="Polar residues" evidence="1">
    <location>
        <begin position="1"/>
        <end position="10"/>
    </location>
</feature>
<name>YB072_YEAST</name>
<organism>
    <name type="scientific">Saccharomyces cerevisiae (strain ATCC 204508 / S288c)</name>
    <name type="common">Baker's yeast</name>
    <dbReference type="NCBI Taxonomy" id="559292"/>
    <lineage>
        <taxon>Eukaryota</taxon>
        <taxon>Fungi</taxon>
        <taxon>Dikarya</taxon>
        <taxon>Ascomycota</taxon>
        <taxon>Saccharomycotina</taxon>
        <taxon>Saccharomycetes</taxon>
        <taxon>Saccharomycetales</taxon>
        <taxon>Saccharomycetaceae</taxon>
        <taxon>Saccharomyces</taxon>
    </lineage>
</organism>
<accession>Q3E794</accession>
<accession>D6VQ72</accession>
<proteinExistence type="predicted"/>
<gene>
    <name type="ordered locus">YBR072C-A</name>
</gene>